<dbReference type="EMBL" id="AF005494">
    <property type="protein sequence ID" value="AAD03171.1"/>
    <property type="molecule type" value="Genomic_DNA"/>
</dbReference>
<dbReference type="SMR" id="O70888"/>
<dbReference type="Proteomes" id="UP000007687">
    <property type="component" value="Segment"/>
</dbReference>
<dbReference type="GO" id="GO:0043657">
    <property type="term" value="C:host cell"/>
    <property type="evidence" value="ECO:0007669"/>
    <property type="project" value="GOC"/>
</dbReference>
<dbReference type="GO" id="GO:0042025">
    <property type="term" value="C:host cell nucleus"/>
    <property type="evidence" value="ECO:0007669"/>
    <property type="project" value="UniProtKB-SubCell"/>
</dbReference>
<dbReference type="GO" id="GO:0043655">
    <property type="term" value="C:host extracellular space"/>
    <property type="evidence" value="ECO:0007669"/>
    <property type="project" value="UniProtKB-SubCell"/>
</dbReference>
<dbReference type="GO" id="GO:0044423">
    <property type="term" value="C:virion component"/>
    <property type="evidence" value="ECO:0007669"/>
    <property type="project" value="UniProtKB-UniRule"/>
</dbReference>
<dbReference type="GO" id="GO:0006351">
    <property type="term" value="P:DNA-templated transcription"/>
    <property type="evidence" value="ECO:0007669"/>
    <property type="project" value="UniProtKB-UniRule"/>
</dbReference>
<dbReference type="GO" id="GO:0034220">
    <property type="term" value="P:monoatomic ion transmembrane transport"/>
    <property type="evidence" value="ECO:0007669"/>
    <property type="project" value="UniProtKB-KW"/>
</dbReference>
<dbReference type="GO" id="GO:0051260">
    <property type="term" value="P:protein homooligomerization"/>
    <property type="evidence" value="ECO:0007669"/>
    <property type="project" value="UniProtKB-UniRule"/>
</dbReference>
<dbReference type="GO" id="GO:0006355">
    <property type="term" value="P:regulation of DNA-templated transcription"/>
    <property type="evidence" value="ECO:0007669"/>
    <property type="project" value="UniProtKB-UniRule"/>
</dbReference>
<dbReference type="GO" id="GO:0046718">
    <property type="term" value="P:symbiont entry into host cell"/>
    <property type="evidence" value="ECO:0007669"/>
    <property type="project" value="UniProtKB-KW"/>
</dbReference>
<dbReference type="GO" id="GO:0052151">
    <property type="term" value="P:symbiont-mediated activation of host apoptosis"/>
    <property type="evidence" value="ECO:0007669"/>
    <property type="project" value="UniProtKB-UniRule"/>
</dbReference>
<dbReference type="GO" id="GO:0039592">
    <property type="term" value="P:symbiont-mediated arrest of host cell cycle during G2/M transition"/>
    <property type="evidence" value="ECO:0007669"/>
    <property type="project" value="UniProtKB-UniRule"/>
</dbReference>
<dbReference type="GO" id="GO:0075732">
    <property type="term" value="P:viral penetration into host nucleus"/>
    <property type="evidence" value="ECO:0007669"/>
    <property type="project" value="UniProtKB-UniRule"/>
</dbReference>
<dbReference type="Gene3D" id="6.10.210.10">
    <property type="match status" value="1"/>
</dbReference>
<dbReference type="Gene3D" id="1.20.5.90">
    <property type="entry name" value="VpR/VpX protein, C-terminal domain"/>
    <property type="match status" value="1"/>
</dbReference>
<dbReference type="HAMAP" id="MF_04080">
    <property type="entry name" value="HIV_VPR"/>
    <property type="match status" value="1"/>
</dbReference>
<dbReference type="InterPro" id="IPR000012">
    <property type="entry name" value="RetroV_VpR/X"/>
</dbReference>
<dbReference type="Pfam" id="PF00522">
    <property type="entry name" value="VPR"/>
    <property type="match status" value="1"/>
</dbReference>
<dbReference type="PRINTS" id="PR00444">
    <property type="entry name" value="HIVVPRVPX"/>
</dbReference>
<keyword id="KW-0010">Activator</keyword>
<keyword id="KW-0014">AIDS</keyword>
<keyword id="KW-0053">Apoptosis</keyword>
<keyword id="KW-0131">Cell cycle</keyword>
<keyword id="KW-1079">Host G2/M cell cycle arrest by virus</keyword>
<keyword id="KW-1048">Host nucleus</keyword>
<keyword id="KW-0945">Host-virus interaction</keyword>
<keyword id="KW-0407">Ion channel</keyword>
<keyword id="KW-0406">Ion transport</keyword>
<keyword id="KW-1121">Modulation of host cell cycle by virus</keyword>
<keyword id="KW-0597">Phosphoprotein</keyword>
<keyword id="KW-1185">Reference proteome</keyword>
<keyword id="KW-0804">Transcription</keyword>
<keyword id="KW-0805">Transcription regulation</keyword>
<keyword id="KW-0813">Transport</keyword>
<keyword id="KW-1163">Viral penetration into host nucleus</keyword>
<keyword id="KW-0946">Virion</keyword>
<keyword id="KW-1160">Virus entry into host cell</keyword>
<organism>
    <name type="scientific">Human immunodeficiency virus type 1 group M subtype F1 (isolate 93BR020)</name>
    <name type="common">HIV-1</name>
    <dbReference type="NCBI Taxonomy" id="388814"/>
    <lineage>
        <taxon>Viruses</taxon>
        <taxon>Riboviria</taxon>
        <taxon>Pararnavirae</taxon>
        <taxon>Artverviricota</taxon>
        <taxon>Revtraviricetes</taxon>
        <taxon>Ortervirales</taxon>
        <taxon>Retroviridae</taxon>
        <taxon>Orthoretrovirinae</taxon>
        <taxon>Lentivirus</taxon>
        <taxon>Human immunodeficiency virus type 1</taxon>
    </lineage>
</organism>
<proteinExistence type="inferred from homology"/>
<organismHost>
    <name type="scientific">Homo sapiens</name>
    <name type="common">Human</name>
    <dbReference type="NCBI Taxonomy" id="9606"/>
</organismHost>
<accession>O70888</accession>
<gene>
    <name evidence="1" type="primary">vpr</name>
</gene>
<protein>
    <recommendedName>
        <fullName evidence="1">Protein Vpr</fullName>
    </recommendedName>
    <alternativeName>
        <fullName evidence="1">R ORF protein</fullName>
    </alternativeName>
    <alternativeName>
        <fullName evidence="1">Viral protein R</fullName>
    </alternativeName>
</protein>
<comment type="function">
    <text evidence="1">During virus replication, may deplete host UNG protein, and incude G2-M cell cycle arrest. Acts by targeting specific host proteins for degradation by the 26S proteasome, through association with the cellular CUL4A-DDB1 E3 ligase complex by direct interaction with host VPRPB/DCAF-1. Cell cycle arrest reportedly occurs within hours of infection and is not blocked by antiviral agents, suggesting that it is initiated by the VPR carried into the virion. Additionally, VPR induces apoptosis in a cell cycle dependent manner suggesting that these two effects are mechanistically linked. Detected in the serum and cerebrospinal fluid of AIDS patient, VPR may also induce cell death to bystander cells.</text>
</comment>
<comment type="function">
    <text evidence="1">During virus entry, plays a role in the transport of the viral pre-integration (PIC) complex to the host nucleus. This function is crucial for viral infection of non-dividing macrophages. May act directly at the nuclear pore complex, by binding nucleoporins phenylalanine-glycine (FG)-repeat regions.</text>
</comment>
<comment type="subunit">
    <text evidence="1">Homooligomer, may form homodimer. Interacts with p6-gag region of the Pr55 Gag precursor protein through a (Leu-X-X)4 motif near the C-terminus of the P6gag protein. Interacts with host UNG. May interact with host RAD23A/HHR23A. Interacts with host VPRBP/DCAF1, leading to hijack the CUL4A-RBX1-DDB1-DCAF1/VPRBP complex, mediating ubiquitination of host proteins such as TERT and ZGPAT and arrest of the cell cycle in G2 phase.</text>
</comment>
<comment type="subcellular location">
    <subcellularLocation>
        <location evidence="1">Virion</location>
    </subcellularLocation>
    <subcellularLocation>
        <location evidence="1">Host nucleus</location>
    </subcellularLocation>
    <subcellularLocation>
        <location evidence="1">Host extracellular space</location>
    </subcellularLocation>
    <text evidence="1">Incorporation into virion is dependent on p6 GAG sequences. Lacks a canonical nuclear localization signal, thus import into nucleus may function independently of the human importin pathway. Detected in high quantity in the serum and cerebrospinal fluid of AIDS patient.</text>
</comment>
<comment type="PTM">
    <text evidence="1">Phosphorylated on several residues by host. These phosphorylations regulate VPR activity for the nuclear import of the HIV-1 pre-integration complex.</text>
</comment>
<comment type="miscellaneous">
    <text evidence="1">HIV-1 lineages are divided in three main groups, M (for Major), O (for Outlier), and N (for New, or Non-M, Non-O). The vast majority of strains found worldwide belong to the group M. Group O seems to be endemic to and largely confined to Cameroon and neighboring countries in West Central Africa, where these viruses represent a small minority of HIV-1 strains. The group N is represented by a limited number of isolates from Cameroonian persons. The group M is further subdivided in 9 clades or subtypes (A to D, F to H, J and K).</text>
</comment>
<comment type="similarity">
    <text evidence="1">Belongs to the HIV-1 VPR protein family.</text>
</comment>
<reference key="1">
    <citation type="journal article" date="1998" name="J. Virol.">
        <title>A comprehensive panel of near-full-length clones and reference sequences for non-subtype B isolates of human immunodeficiency virus type 1.</title>
        <authorList>
            <person name="Gao F."/>
            <person name="Robertson D.L."/>
            <person name="Carruthers C.D."/>
            <person name="Morrison S.G."/>
            <person name="Jian B."/>
            <person name="Chen Y."/>
            <person name="Barre-Sinoussi F."/>
            <person name="Girard M."/>
            <person name="Srinivasan A."/>
            <person name="Abimiku A.G."/>
            <person name="Shaw G.M."/>
            <person name="Sharp P.M."/>
            <person name="Hahn B.H."/>
        </authorList>
    </citation>
    <scope>NUCLEOTIDE SEQUENCE [GENOMIC DNA]</scope>
</reference>
<sequence>MEQAPEDQGPQREPYNEWTLDLLEELKNEAVRHFPRPWLHSLGQHIYNTYGDTWEGVEAIIRILQQLLFIHFRIGCRHSRIGITRQRRVRNGTSRS</sequence>
<feature type="chain" id="PRO_0000246754" description="Protein Vpr">
    <location>
        <begin position="1"/>
        <end position="96"/>
    </location>
</feature>
<feature type="region of interest" description="Homooligomerization" evidence="1">
    <location>
        <begin position="1"/>
        <end position="42"/>
    </location>
</feature>
<feature type="modified residue" description="Phosphoserine; by host" evidence="1">
    <location>
        <position position="79"/>
    </location>
</feature>
<feature type="modified residue" description="Phosphoserine; by host" evidence="1">
    <location>
        <position position="94"/>
    </location>
</feature>
<feature type="modified residue" description="Phosphoserine; by host" evidence="1">
    <location>
        <position position="96"/>
    </location>
</feature>
<evidence type="ECO:0000255" key="1">
    <source>
        <dbReference type="HAMAP-Rule" id="MF_04080"/>
    </source>
</evidence>
<name>VPR_HV193</name>